<protein>
    <recommendedName>
        <fullName evidence="1">Nucleotide-binding protein Spy49_0545</fullName>
    </recommendedName>
</protein>
<proteinExistence type="inferred from homology"/>
<gene>
    <name type="ordered locus">Spy49_0545</name>
</gene>
<keyword id="KW-0067">ATP-binding</keyword>
<keyword id="KW-0342">GTP-binding</keyword>
<keyword id="KW-0547">Nucleotide-binding</keyword>
<comment type="function">
    <text evidence="1">Displays ATPase and GTPase activities.</text>
</comment>
<comment type="similarity">
    <text evidence="1">Belongs to the RapZ-like family.</text>
</comment>
<reference key="1">
    <citation type="journal article" date="2008" name="J. Bacteriol.">
        <title>Genome sequence of a nephritogenic and highly transformable M49 strain of Streptococcus pyogenes.</title>
        <authorList>
            <person name="McShan W.M."/>
            <person name="Ferretti J.J."/>
            <person name="Karasawa T."/>
            <person name="Suvorov A.N."/>
            <person name="Lin S."/>
            <person name="Qin B."/>
            <person name="Jia H."/>
            <person name="Kenton S."/>
            <person name="Najar F."/>
            <person name="Wu H."/>
            <person name="Scott J."/>
            <person name="Roe B.A."/>
            <person name="Savic D.J."/>
        </authorList>
    </citation>
    <scope>NUCLEOTIDE SEQUENCE [LARGE SCALE GENOMIC DNA]</scope>
    <source>
        <strain>NZ131</strain>
    </source>
</reference>
<sequence length="296" mass="33587">MSDKHINLVIVTGMSGAGKTVAIQSFEDLGYFTIDNMPPALVPKFLELIEQTNENRRVALVVDMRSRLFFKEINSTLDSIESNPSIDFRILFLDATDGELVSRYKETRRSHPLAADGRVLDGIRLERELLSPLKSMSQHVVDTTKLTPRQLRKTISDQFSEGSNQASFRIEVMSFGFKYGLPLDADLVFDVRFLPNPYYQVELREKTGLDEDVFNYVMSHPESEVFYKHLLNLIVPILPAYQKEGKSVLTVAIGCTGGQHRSVAFAHCLAESLATDWSVNESHRDQNRRKETVNRS</sequence>
<organism>
    <name type="scientific">Streptococcus pyogenes serotype M49 (strain NZ131)</name>
    <dbReference type="NCBI Taxonomy" id="471876"/>
    <lineage>
        <taxon>Bacteria</taxon>
        <taxon>Bacillati</taxon>
        <taxon>Bacillota</taxon>
        <taxon>Bacilli</taxon>
        <taxon>Lactobacillales</taxon>
        <taxon>Streptococcaceae</taxon>
        <taxon>Streptococcus</taxon>
    </lineage>
</organism>
<evidence type="ECO:0000255" key="1">
    <source>
        <dbReference type="HAMAP-Rule" id="MF_00636"/>
    </source>
</evidence>
<name>Y545_STRPZ</name>
<accession>B5XKL0</accession>
<dbReference type="EMBL" id="CP000829">
    <property type="protein sequence ID" value="ACI60872.1"/>
    <property type="molecule type" value="Genomic_DNA"/>
</dbReference>
<dbReference type="SMR" id="B5XKL0"/>
<dbReference type="KEGG" id="soz:Spy49_0545"/>
<dbReference type="HOGENOM" id="CLU_059558_0_0_9"/>
<dbReference type="Proteomes" id="UP000001039">
    <property type="component" value="Chromosome"/>
</dbReference>
<dbReference type="GO" id="GO:0005524">
    <property type="term" value="F:ATP binding"/>
    <property type="evidence" value="ECO:0007669"/>
    <property type="project" value="UniProtKB-UniRule"/>
</dbReference>
<dbReference type="GO" id="GO:0005525">
    <property type="term" value="F:GTP binding"/>
    <property type="evidence" value="ECO:0007669"/>
    <property type="project" value="UniProtKB-UniRule"/>
</dbReference>
<dbReference type="Gene3D" id="3.40.50.300">
    <property type="entry name" value="P-loop containing nucleotide triphosphate hydrolases"/>
    <property type="match status" value="1"/>
</dbReference>
<dbReference type="HAMAP" id="MF_00636">
    <property type="entry name" value="RapZ_like"/>
    <property type="match status" value="1"/>
</dbReference>
<dbReference type="InterPro" id="IPR027417">
    <property type="entry name" value="P-loop_NTPase"/>
</dbReference>
<dbReference type="InterPro" id="IPR005337">
    <property type="entry name" value="RapZ-like"/>
</dbReference>
<dbReference type="InterPro" id="IPR053930">
    <property type="entry name" value="RapZ-like_N"/>
</dbReference>
<dbReference type="InterPro" id="IPR053931">
    <property type="entry name" value="RapZ_C"/>
</dbReference>
<dbReference type="NCBIfam" id="NF003828">
    <property type="entry name" value="PRK05416.1"/>
    <property type="match status" value="1"/>
</dbReference>
<dbReference type="PANTHER" id="PTHR30448">
    <property type="entry name" value="RNASE ADAPTER PROTEIN RAPZ"/>
    <property type="match status" value="1"/>
</dbReference>
<dbReference type="PANTHER" id="PTHR30448:SF0">
    <property type="entry name" value="RNASE ADAPTER PROTEIN RAPZ"/>
    <property type="match status" value="1"/>
</dbReference>
<dbReference type="Pfam" id="PF22740">
    <property type="entry name" value="PapZ_C"/>
    <property type="match status" value="1"/>
</dbReference>
<dbReference type="Pfam" id="PF03668">
    <property type="entry name" value="RapZ-like_N"/>
    <property type="match status" value="1"/>
</dbReference>
<dbReference type="PIRSF" id="PIRSF005052">
    <property type="entry name" value="P-loopkin"/>
    <property type="match status" value="1"/>
</dbReference>
<dbReference type="SUPFAM" id="SSF52540">
    <property type="entry name" value="P-loop containing nucleoside triphosphate hydrolases"/>
    <property type="match status" value="1"/>
</dbReference>
<feature type="chain" id="PRO_1000130790" description="Nucleotide-binding protein Spy49_0545">
    <location>
        <begin position="1"/>
        <end position="296"/>
    </location>
</feature>
<feature type="binding site" evidence="1">
    <location>
        <begin position="13"/>
        <end position="20"/>
    </location>
    <ligand>
        <name>ATP</name>
        <dbReference type="ChEBI" id="CHEBI:30616"/>
    </ligand>
</feature>
<feature type="binding site" evidence="1">
    <location>
        <begin position="63"/>
        <end position="66"/>
    </location>
    <ligand>
        <name>GTP</name>
        <dbReference type="ChEBI" id="CHEBI:37565"/>
    </ligand>
</feature>